<feature type="chain" id="PRO_0000229367" description="tRNA pseudouridine synthase B">
    <location>
        <begin position="1"/>
        <end position="289"/>
    </location>
</feature>
<feature type="region of interest" description="Disordered" evidence="2">
    <location>
        <begin position="243"/>
        <end position="289"/>
    </location>
</feature>
<feature type="compositionally biased region" description="Basic and acidic residues" evidence="2">
    <location>
        <begin position="265"/>
        <end position="289"/>
    </location>
</feature>
<feature type="active site" description="Nucleophile" evidence="1">
    <location>
        <position position="55"/>
    </location>
</feature>
<organism>
    <name type="scientific">Chlorobium luteolum (strain DSM 273 / BCRC 81028 / 2530)</name>
    <name type="common">Pelodictyon luteolum</name>
    <dbReference type="NCBI Taxonomy" id="319225"/>
    <lineage>
        <taxon>Bacteria</taxon>
        <taxon>Pseudomonadati</taxon>
        <taxon>Chlorobiota</taxon>
        <taxon>Chlorobiia</taxon>
        <taxon>Chlorobiales</taxon>
        <taxon>Chlorobiaceae</taxon>
        <taxon>Chlorobium/Pelodictyon group</taxon>
        <taxon>Pelodictyon</taxon>
    </lineage>
</organism>
<comment type="function">
    <text evidence="1">Responsible for synthesis of pseudouridine from uracil-55 in the psi GC loop of transfer RNAs.</text>
</comment>
<comment type="catalytic activity">
    <reaction evidence="1">
        <text>uridine(55) in tRNA = pseudouridine(55) in tRNA</text>
        <dbReference type="Rhea" id="RHEA:42532"/>
        <dbReference type="Rhea" id="RHEA-COMP:10101"/>
        <dbReference type="Rhea" id="RHEA-COMP:10102"/>
        <dbReference type="ChEBI" id="CHEBI:65314"/>
        <dbReference type="ChEBI" id="CHEBI:65315"/>
        <dbReference type="EC" id="5.4.99.25"/>
    </reaction>
</comment>
<comment type="similarity">
    <text evidence="1">Belongs to the pseudouridine synthase TruB family. Type 1 subfamily.</text>
</comment>
<keyword id="KW-0413">Isomerase</keyword>
<keyword id="KW-1185">Reference proteome</keyword>
<keyword id="KW-0819">tRNA processing</keyword>
<reference key="1">
    <citation type="submission" date="2005-08" db="EMBL/GenBank/DDBJ databases">
        <title>Complete sequence of Pelodictyon luteolum DSM 273.</title>
        <authorList>
            <consortium name="US DOE Joint Genome Institute"/>
            <person name="Copeland A."/>
            <person name="Lucas S."/>
            <person name="Lapidus A."/>
            <person name="Barry K."/>
            <person name="Detter J.C."/>
            <person name="Glavina T."/>
            <person name="Hammon N."/>
            <person name="Israni S."/>
            <person name="Pitluck S."/>
            <person name="Bryant D."/>
            <person name="Schmutz J."/>
            <person name="Larimer F."/>
            <person name="Land M."/>
            <person name="Kyrpides N."/>
            <person name="Ivanova N."/>
            <person name="Richardson P."/>
        </authorList>
    </citation>
    <scope>NUCLEOTIDE SEQUENCE [LARGE SCALE GENOMIC DNA]</scope>
    <source>
        <strain>DSM 273 / BCRC 81028 / 2530</strain>
    </source>
</reference>
<name>TRUB_CHLL3</name>
<protein>
    <recommendedName>
        <fullName evidence="1">tRNA pseudouridine synthase B</fullName>
        <ecNumber evidence="1">5.4.99.25</ecNumber>
    </recommendedName>
    <alternativeName>
        <fullName evidence="1">tRNA pseudouridine(55) synthase</fullName>
        <shortName evidence="1">Psi55 synthase</shortName>
    </alternativeName>
    <alternativeName>
        <fullName evidence="1">tRNA pseudouridylate synthase</fullName>
    </alternativeName>
    <alternativeName>
        <fullName evidence="1">tRNA-uridine isomerase</fullName>
    </alternativeName>
</protein>
<proteinExistence type="inferred from homology"/>
<gene>
    <name evidence="1" type="primary">truB</name>
    <name type="ordered locus">Plut_1777</name>
</gene>
<evidence type="ECO:0000255" key="1">
    <source>
        <dbReference type="HAMAP-Rule" id="MF_01080"/>
    </source>
</evidence>
<evidence type="ECO:0000256" key="2">
    <source>
        <dbReference type="SAM" id="MobiDB-lite"/>
    </source>
</evidence>
<accession>Q3B200</accession>
<dbReference type="EC" id="5.4.99.25" evidence="1"/>
<dbReference type="EMBL" id="CP000096">
    <property type="protein sequence ID" value="ABB24631.1"/>
    <property type="molecule type" value="Genomic_DNA"/>
</dbReference>
<dbReference type="RefSeq" id="WP_011358503.1">
    <property type="nucleotide sequence ID" value="NC_007512.1"/>
</dbReference>
<dbReference type="SMR" id="Q3B200"/>
<dbReference type="STRING" id="319225.Plut_1777"/>
<dbReference type="KEGG" id="plt:Plut_1777"/>
<dbReference type="eggNOG" id="COG0130">
    <property type="taxonomic scope" value="Bacteria"/>
</dbReference>
<dbReference type="HOGENOM" id="CLU_032087_2_0_10"/>
<dbReference type="OrthoDB" id="9802309at2"/>
<dbReference type="Proteomes" id="UP000002709">
    <property type="component" value="Chromosome"/>
</dbReference>
<dbReference type="GO" id="GO:0003723">
    <property type="term" value="F:RNA binding"/>
    <property type="evidence" value="ECO:0007669"/>
    <property type="project" value="InterPro"/>
</dbReference>
<dbReference type="GO" id="GO:0160148">
    <property type="term" value="F:tRNA pseudouridine(55) synthase activity"/>
    <property type="evidence" value="ECO:0007669"/>
    <property type="project" value="UniProtKB-EC"/>
</dbReference>
<dbReference type="GO" id="GO:1990481">
    <property type="term" value="P:mRNA pseudouridine synthesis"/>
    <property type="evidence" value="ECO:0007669"/>
    <property type="project" value="TreeGrafter"/>
</dbReference>
<dbReference type="GO" id="GO:0031119">
    <property type="term" value="P:tRNA pseudouridine synthesis"/>
    <property type="evidence" value="ECO:0007669"/>
    <property type="project" value="UniProtKB-UniRule"/>
</dbReference>
<dbReference type="Gene3D" id="3.30.2350.10">
    <property type="entry name" value="Pseudouridine synthase"/>
    <property type="match status" value="1"/>
</dbReference>
<dbReference type="HAMAP" id="MF_01080">
    <property type="entry name" value="TruB_bact"/>
    <property type="match status" value="1"/>
</dbReference>
<dbReference type="InterPro" id="IPR020103">
    <property type="entry name" value="PsdUridine_synth_cat_dom_sf"/>
</dbReference>
<dbReference type="InterPro" id="IPR002501">
    <property type="entry name" value="PsdUridine_synth_N"/>
</dbReference>
<dbReference type="InterPro" id="IPR014780">
    <property type="entry name" value="tRNA_psdUridine_synth_TruB"/>
</dbReference>
<dbReference type="InterPro" id="IPR032819">
    <property type="entry name" value="TruB_C"/>
</dbReference>
<dbReference type="NCBIfam" id="TIGR00431">
    <property type="entry name" value="TruB"/>
    <property type="match status" value="1"/>
</dbReference>
<dbReference type="PANTHER" id="PTHR13767:SF2">
    <property type="entry name" value="PSEUDOURIDYLATE SYNTHASE TRUB1"/>
    <property type="match status" value="1"/>
</dbReference>
<dbReference type="PANTHER" id="PTHR13767">
    <property type="entry name" value="TRNA-PSEUDOURIDINE SYNTHASE"/>
    <property type="match status" value="1"/>
</dbReference>
<dbReference type="Pfam" id="PF16198">
    <property type="entry name" value="TruB_C_2"/>
    <property type="match status" value="1"/>
</dbReference>
<dbReference type="Pfam" id="PF01509">
    <property type="entry name" value="TruB_N"/>
    <property type="match status" value="1"/>
</dbReference>
<dbReference type="SUPFAM" id="SSF55120">
    <property type="entry name" value="Pseudouridine synthase"/>
    <property type="match status" value="1"/>
</dbReference>
<sequence>MEAEHTSTKGVPEAGEFLLLDKPLDWTSFDVVAKIRNTYKRGGLKRKVGHSGTLDPKATGLLILATGRKTKEIASLEGLDKEYLAVIKLGARTASHDVETPETDHTPAGHITLAMVRAAALAFVGPRLQQPPMHSASWHEGKRLYALARKGEEVKERKAKEIVIHQFEVTHMQGPLVYCRLLVSKGSYIRVIADELGMALGVGAYLAGLRRTAVGPYRVEDAMSVEDARARILSQIAVDEQQPGGVLAQHEREGSRALDSAAGNAEHDREEARIADNNREDRSRQHADR</sequence>